<feature type="chain" id="PRO_0000202669" description="Uncharacterized protein YFL064C">
    <location>
        <begin position="1"/>
        <end position="174"/>
    </location>
</feature>
<feature type="sequence conflict" description="In Ref. 3; AAS56132." evidence="1" ref="3">
    <original>S</original>
    <variation>P</variation>
    <location>
        <position position="104"/>
    </location>
</feature>
<keyword id="KW-1185">Reference proteome</keyword>
<proteinExistence type="predicted"/>
<accession>P43540</accession>
<accession>D6VTG7</accession>
<accession>Q6Q5Q4</accession>
<gene>
    <name type="ordered locus">YFL064C</name>
</gene>
<reference key="1">
    <citation type="journal article" date="1995" name="Nat. Genet.">
        <title>Analysis of the nucleotide sequence of chromosome VI from Saccharomyces cerevisiae.</title>
        <authorList>
            <person name="Murakami Y."/>
            <person name="Naitou M."/>
            <person name="Hagiwara H."/>
            <person name="Shibata T."/>
            <person name="Ozawa M."/>
            <person name="Sasanuma S."/>
            <person name="Sasanuma M."/>
            <person name="Tsuchiya Y."/>
            <person name="Soeda E."/>
            <person name="Yokoyama K."/>
            <person name="Yamazaki M."/>
            <person name="Tashiro H."/>
            <person name="Eki T."/>
        </authorList>
    </citation>
    <scope>NUCLEOTIDE SEQUENCE [LARGE SCALE GENOMIC DNA]</scope>
    <source>
        <strain>ATCC 204508 / S288c</strain>
    </source>
</reference>
<reference key="2">
    <citation type="journal article" date="2014" name="G3 (Bethesda)">
        <title>The reference genome sequence of Saccharomyces cerevisiae: Then and now.</title>
        <authorList>
            <person name="Engel S.R."/>
            <person name="Dietrich F.S."/>
            <person name="Fisk D.G."/>
            <person name="Binkley G."/>
            <person name="Balakrishnan R."/>
            <person name="Costanzo M.C."/>
            <person name="Dwight S.S."/>
            <person name="Hitz B.C."/>
            <person name="Karra K."/>
            <person name="Nash R.S."/>
            <person name="Weng S."/>
            <person name="Wong E.D."/>
            <person name="Lloyd P."/>
            <person name="Skrzypek M.S."/>
            <person name="Miyasato S.R."/>
            <person name="Simison M."/>
            <person name="Cherry J.M."/>
        </authorList>
    </citation>
    <scope>GENOME REANNOTATION</scope>
    <source>
        <strain>ATCC 204508 / S288c</strain>
    </source>
</reference>
<reference key="3">
    <citation type="journal article" date="2007" name="Genome Res.">
        <title>Approaching a complete repository of sequence-verified protein-encoding clones for Saccharomyces cerevisiae.</title>
        <authorList>
            <person name="Hu Y."/>
            <person name="Rolfs A."/>
            <person name="Bhullar B."/>
            <person name="Murthy T.V.S."/>
            <person name="Zhu C."/>
            <person name="Berger M.F."/>
            <person name="Camargo A.A."/>
            <person name="Kelley F."/>
            <person name="McCarron S."/>
            <person name="Jepson D."/>
            <person name="Richardson A."/>
            <person name="Raphael J."/>
            <person name="Moreira D."/>
            <person name="Taycher E."/>
            <person name="Zuo D."/>
            <person name="Mohr S."/>
            <person name="Kane M.F."/>
            <person name="Williamson J."/>
            <person name="Simpson A.J.G."/>
            <person name="Bulyk M.L."/>
            <person name="Harlow E."/>
            <person name="Marsischky G."/>
            <person name="Kolodner R.D."/>
            <person name="LaBaer J."/>
        </authorList>
    </citation>
    <scope>NUCLEOTIDE SEQUENCE [GENOMIC DNA]</scope>
    <source>
        <strain>ATCC 204508 / S288c</strain>
    </source>
</reference>
<evidence type="ECO:0000305" key="1"/>
<sequence length="174" mass="20427">MKVSDRRKFEKANFDEFESALNNKNDLVHCPSITLFESIPTEVRSFYEDEKSGLIKVVKFRTGAMNRKRSFEKIVISVMVGKNVQKFLTFVEDEPDFQGGPIPSKYLIPKKINLMVYTLFQVHTLKFNRKDYDTLSLFYLNRGYYNELSFPCPGTLSRNSECQAERQLYDAYFH</sequence>
<protein>
    <recommendedName>
        <fullName>Uncharacterized protein YFL064C</fullName>
    </recommendedName>
</protein>
<name>YFG4_YEAST</name>
<organism>
    <name type="scientific">Saccharomyces cerevisiae (strain ATCC 204508 / S288c)</name>
    <name type="common">Baker's yeast</name>
    <dbReference type="NCBI Taxonomy" id="559292"/>
    <lineage>
        <taxon>Eukaryota</taxon>
        <taxon>Fungi</taxon>
        <taxon>Dikarya</taxon>
        <taxon>Ascomycota</taxon>
        <taxon>Saccharomycotina</taxon>
        <taxon>Saccharomycetes</taxon>
        <taxon>Saccharomycetales</taxon>
        <taxon>Saccharomycetaceae</taxon>
        <taxon>Saccharomyces</taxon>
    </lineage>
</organism>
<dbReference type="EMBL" id="D50617">
    <property type="protein sequence ID" value="BAA09177.1"/>
    <property type="molecule type" value="Genomic_DNA"/>
</dbReference>
<dbReference type="EMBL" id="AY557806">
    <property type="protein sequence ID" value="AAS56132.1"/>
    <property type="molecule type" value="Genomic_DNA"/>
</dbReference>
<dbReference type="EMBL" id="BK006940">
    <property type="protein sequence ID" value="DAA12377.1"/>
    <property type="molecule type" value="Genomic_DNA"/>
</dbReference>
<dbReference type="RefSeq" id="NP_116591.1">
    <property type="nucleotide sequence ID" value="NM_001179903.1"/>
</dbReference>
<dbReference type="BioGRID" id="31084">
    <property type="interactions" value="33"/>
</dbReference>
<dbReference type="FunCoup" id="P43540">
    <property type="interactions" value="40"/>
</dbReference>
<dbReference type="STRING" id="4932.YFL064C"/>
<dbReference type="PaxDb" id="4932-YFL064C"/>
<dbReference type="PeptideAtlas" id="P43540"/>
<dbReference type="EnsemblFungi" id="YFL064C_mRNA">
    <property type="protein sequence ID" value="YFL064C"/>
    <property type="gene ID" value="YFL064C"/>
</dbReference>
<dbReference type="GeneID" id="850480"/>
<dbReference type="KEGG" id="sce:YFL064C"/>
<dbReference type="AGR" id="SGD:S000001830"/>
<dbReference type="SGD" id="S000001830">
    <property type="gene designation" value="YFL064C"/>
</dbReference>
<dbReference type="VEuPathDB" id="FungiDB:YFL064C"/>
<dbReference type="GeneTree" id="ENSGT00940000153173"/>
<dbReference type="HOGENOM" id="CLU_119679_0_0_1"/>
<dbReference type="InParanoid" id="P43540"/>
<dbReference type="OMA" id="RTGAMNR"/>
<dbReference type="OrthoDB" id="4045008at2759"/>
<dbReference type="BioCyc" id="YEAST:G3O-30404-MONOMER"/>
<dbReference type="PRO" id="PR:P43540"/>
<dbReference type="Proteomes" id="UP000002311">
    <property type="component" value="Chromosome VI"/>
</dbReference>
<dbReference type="RNAct" id="P43540">
    <property type="molecule type" value="protein"/>
</dbReference>
<dbReference type="InterPro" id="IPR021646">
    <property type="entry name" value="Sir1_ORC-binding"/>
</dbReference>
<dbReference type="InterPro" id="IPR050978">
    <property type="entry name" value="Y'_ATP-dependent_helicase"/>
</dbReference>
<dbReference type="PANTHER" id="PTHR31583">
    <property type="match status" value="1"/>
</dbReference>
<dbReference type="PANTHER" id="PTHR31583:SF2">
    <property type="match status" value="1"/>
</dbReference>
<dbReference type="Pfam" id="PF11603">
    <property type="entry name" value="Sir1"/>
    <property type="match status" value="1"/>
</dbReference>